<organism>
    <name type="scientific">Burkholderia ambifaria (strain MC40-6)</name>
    <dbReference type="NCBI Taxonomy" id="398577"/>
    <lineage>
        <taxon>Bacteria</taxon>
        <taxon>Pseudomonadati</taxon>
        <taxon>Pseudomonadota</taxon>
        <taxon>Betaproteobacteria</taxon>
        <taxon>Burkholderiales</taxon>
        <taxon>Burkholderiaceae</taxon>
        <taxon>Burkholderia</taxon>
        <taxon>Burkholderia cepacia complex</taxon>
    </lineage>
</organism>
<sequence>MVTTHNLGFPRIGAQRELKFGLERYWKGESSRDELKALGAELRERHWNDQRDLDLAPIGDFSFYDQVLDMSFTLGNLPKRVQGFHGDVLDNYFRVARGRSAQAADEHATCCGGVSAGEMTKWFDTNYHYIVPEFHADTNFSLDPSCLLQQLAEARALGVAGKPVILGPVTYLWLGKAKDDSDRLALLPKLLPVYGALLDTLTAQGVEWVQIDEPILVTELDAEWRQALRTAYAALETRRIKVLLATYFGALGDNLTLAASLPVDGLHVDAINARDEVDALVRELPADRVLSVGAINGRNIWKTDLNATLDWLEPLAKQLGERLWIAPSCSLLHVPVDLASEQKLDPEIRSWLAFALQKLDELNVLATALNEGRDKVADALAANAAAIDSRRRSPRVNNPAVKAALARIDAQLGNRASPYTQRAPKQSARLNLPAFPTTTIGSFPQTADIRQARRQFKSGALDEAGYRAAMQAEIERSVREQESLELDVLVHGEAERNDMVEYFGEQLDGYAFSQFGWVQSYGSRCVKPPILFGDISRPKAMTVEWITYAQSLTNKPMKGMLTGPVTILNWSFVRDDQPRSVSCYQLALAIRDEVLDLEKAGVRVIQIDEAALREGLPLRRAQWGEYLKWAVEAFRITANGVQDDTQIHTHMCYSEFNDIIASIADMDADVITIETSRSDMELLDAFDSFRYPNEIGPGVYDIHSPNIPTQDHIVGLMKKAAERIPAERLWVNPDCGLKTRQWAEVIPALTNMVAAAKTLRNQVQ</sequence>
<evidence type="ECO:0000255" key="1">
    <source>
        <dbReference type="HAMAP-Rule" id="MF_00172"/>
    </source>
</evidence>
<reference key="1">
    <citation type="submission" date="2008-04" db="EMBL/GenBank/DDBJ databases">
        <title>Complete sequence of chromosome 2 of Burkholderia ambifaria MC40-6.</title>
        <authorList>
            <person name="Copeland A."/>
            <person name="Lucas S."/>
            <person name="Lapidus A."/>
            <person name="Glavina del Rio T."/>
            <person name="Dalin E."/>
            <person name="Tice H."/>
            <person name="Pitluck S."/>
            <person name="Chain P."/>
            <person name="Malfatti S."/>
            <person name="Shin M."/>
            <person name="Vergez L."/>
            <person name="Lang D."/>
            <person name="Schmutz J."/>
            <person name="Larimer F."/>
            <person name="Land M."/>
            <person name="Hauser L."/>
            <person name="Kyrpides N."/>
            <person name="Lykidis A."/>
            <person name="Ramette A."/>
            <person name="Konstantinidis K."/>
            <person name="Tiedje J."/>
            <person name="Richardson P."/>
        </authorList>
    </citation>
    <scope>NUCLEOTIDE SEQUENCE [LARGE SCALE GENOMIC DNA]</scope>
    <source>
        <strain>MC40-6</strain>
    </source>
</reference>
<name>METE_BURA4</name>
<keyword id="KW-0028">Amino-acid biosynthesis</keyword>
<keyword id="KW-0479">Metal-binding</keyword>
<keyword id="KW-0486">Methionine biosynthesis</keyword>
<keyword id="KW-0489">Methyltransferase</keyword>
<keyword id="KW-0677">Repeat</keyword>
<keyword id="KW-0808">Transferase</keyword>
<keyword id="KW-0862">Zinc</keyword>
<accession>B1Z0R8</accession>
<protein>
    <recommendedName>
        <fullName evidence="1">5-methyltetrahydropteroyltriglutamate--homocysteine methyltransferase</fullName>
        <ecNumber evidence="1">2.1.1.14</ecNumber>
    </recommendedName>
    <alternativeName>
        <fullName evidence="1">Cobalamin-independent methionine synthase</fullName>
    </alternativeName>
    <alternativeName>
        <fullName evidence="1">Methionine synthase, vitamin-B12 independent isozyme</fullName>
    </alternativeName>
</protein>
<proteinExistence type="inferred from homology"/>
<gene>
    <name evidence="1" type="primary">metE</name>
    <name type="ordered locus">BamMC406_5175</name>
</gene>
<comment type="function">
    <text evidence="1">Catalyzes the transfer of a methyl group from 5-methyltetrahydrofolate to homocysteine resulting in methionine formation.</text>
</comment>
<comment type="catalytic activity">
    <reaction evidence="1">
        <text>5-methyltetrahydropteroyltri-L-glutamate + L-homocysteine = tetrahydropteroyltri-L-glutamate + L-methionine</text>
        <dbReference type="Rhea" id="RHEA:21196"/>
        <dbReference type="ChEBI" id="CHEBI:57844"/>
        <dbReference type="ChEBI" id="CHEBI:58140"/>
        <dbReference type="ChEBI" id="CHEBI:58199"/>
        <dbReference type="ChEBI" id="CHEBI:58207"/>
        <dbReference type="EC" id="2.1.1.14"/>
    </reaction>
</comment>
<comment type="cofactor">
    <cofactor evidence="1">
        <name>Zn(2+)</name>
        <dbReference type="ChEBI" id="CHEBI:29105"/>
    </cofactor>
    <text evidence="1">Binds 1 zinc ion per subunit.</text>
</comment>
<comment type="pathway">
    <text evidence="1">Amino-acid biosynthesis; L-methionine biosynthesis via de novo pathway; L-methionine from L-homocysteine (MetE route): step 1/1.</text>
</comment>
<comment type="similarity">
    <text evidence="1">Belongs to the vitamin-B12 independent methionine synthase family.</text>
</comment>
<feature type="chain" id="PRO_1000097817" description="5-methyltetrahydropteroyltriglutamate--homocysteine methyltransferase">
    <location>
        <begin position="1"/>
        <end position="764"/>
    </location>
</feature>
<feature type="active site" description="Proton donor" evidence="1">
    <location>
        <position position="703"/>
    </location>
</feature>
<feature type="binding site" evidence="1">
    <location>
        <begin position="16"/>
        <end position="19"/>
    </location>
    <ligand>
        <name>5-methyltetrahydropteroyltri-L-glutamate</name>
        <dbReference type="ChEBI" id="CHEBI:58207"/>
    </ligand>
</feature>
<feature type="binding site" evidence="1">
    <location>
        <position position="121"/>
    </location>
    <ligand>
        <name>5-methyltetrahydropteroyltri-L-glutamate</name>
        <dbReference type="ChEBI" id="CHEBI:58207"/>
    </ligand>
</feature>
<feature type="binding site" evidence="1">
    <location>
        <begin position="440"/>
        <end position="442"/>
    </location>
    <ligand>
        <name>L-homocysteine</name>
        <dbReference type="ChEBI" id="CHEBI:58199"/>
    </ligand>
</feature>
<feature type="binding site" evidence="1">
    <location>
        <begin position="440"/>
        <end position="442"/>
    </location>
    <ligand>
        <name>L-methionine</name>
        <dbReference type="ChEBI" id="CHEBI:57844"/>
    </ligand>
</feature>
<feature type="binding site" evidence="1">
    <location>
        <position position="493"/>
    </location>
    <ligand>
        <name>L-homocysteine</name>
        <dbReference type="ChEBI" id="CHEBI:58199"/>
    </ligand>
</feature>
<feature type="binding site" evidence="1">
    <location>
        <position position="493"/>
    </location>
    <ligand>
        <name>L-methionine</name>
        <dbReference type="ChEBI" id="CHEBI:57844"/>
    </ligand>
</feature>
<feature type="binding site" evidence="1">
    <location>
        <begin position="524"/>
        <end position="525"/>
    </location>
    <ligand>
        <name>5-methyltetrahydropteroyltri-L-glutamate</name>
        <dbReference type="ChEBI" id="CHEBI:58207"/>
    </ligand>
</feature>
<feature type="binding site" evidence="1">
    <location>
        <position position="570"/>
    </location>
    <ligand>
        <name>5-methyltetrahydropteroyltri-L-glutamate</name>
        <dbReference type="ChEBI" id="CHEBI:58207"/>
    </ligand>
</feature>
<feature type="binding site" evidence="1">
    <location>
        <position position="608"/>
    </location>
    <ligand>
        <name>L-homocysteine</name>
        <dbReference type="ChEBI" id="CHEBI:58199"/>
    </ligand>
</feature>
<feature type="binding site" evidence="1">
    <location>
        <position position="608"/>
    </location>
    <ligand>
        <name>L-methionine</name>
        <dbReference type="ChEBI" id="CHEBI:57844"/>
    </ligand>
</feature>
<feature type="binding site" evidence="1">
    <location>
        <position position="614"/>
    </location>
    <ligand>
        <name>5-methyltetrahydropteroyltri-L-glutamate</name>
        <dbReference type="ChEBI" id="CHEBI:58207"/>
    </ligand>
</feature>
<feature type="binding site" evidence="1">
    <location>
        <position position="650"/>
    </location>
    <ligand>
        <name>Zn(2+)</name>
        <dbReference type="ChEBI" id="CHEBI:29105"/>
        <note>catalytic</note>
    </ligand>
</feature>
<feature type="binding site" evidence="1">
    <location>
        <position position="652"/>
    </location>
    <ligand>
        <name>Zn(2+)</name>
        <dbReference type="ChEBI" id="CHEBI:29105"/>
        <note>catalytic</note>
    </ligand>
</feature>
<feature type="binding site" evidence="1">
    <location>
        <position position="674"/>
    </location>
    <ligand>
        <name>Zn(2+)</name>
        <dbReference type="ChEBI" id="CHEBI:29105"/>
        <note>catalytic</note>
    </ligand>
</feature>
<feature type="binding site" evidence="1">
    <location>
        <position position="735"/>
    </location>
    <ligand>
        <name>Zn(2+)</name>
        <dbReference type="ChEBI" id="CHEBI:29105"/>
        <note>catalytic</note>
    </ligand>
</feature>
<dbReference type="EC" id="2.1.1.14" evidence="1"/>
<dbReference type="EMBL" id="CP001026">
    <property type="protein sequence ID" value="ACB67620.1"/>
    <property type="molecule type" value="Genomic_DNA"/>
</dbReference>
<dbReference type="RefSeq" id="WP_012366864.1">
    <property type="nucleotide sequence ID" value="NC_010552.1"/>
</dbReference>
<dbReference type="SMR" id="B1Z0R8"/>
<dbReference type="KEGG" id="bac:BamMC406_5175"/>
<dbReference type="HOGENOM" id="CLU_013175_0_0_4"/>
<dbReference type="OrthoDB" id="244285at2"/>
<dbReference type="UniPathway" id="UPA00051">
    <property type="reaction ID" value="UER00082"/>
</dbReference>
<dbReference type="Proteomes" id="UP000001680">
    <property type="component" value="Chromosome 2"/>
</dbReference>
<dbReference type="GO" id="GO:0003871">
    <property type="term" value="F:5-methyltetrahydropteroyltriglutamate-homocysteine S-methyltransferase activity"/>
    <property type="evidence" value="ECO:0007669"/>
    <property type="project" value="UniProtKB-UniRule"/>
</dbReference>
<dbReference type="GO" id="GO:0008270">
    <property type="term" value="F:zinc ion binding"/>
    <property type="evidence" value="ECO:0007669"/>
    <property type="project" value="InterPro"/>
</dbReference>
<dbReference type="GO" id="GO:0009086">
    <property type="term" value="P:methionine biosynthetic process"/>
    <property type="evidence" value="ECO:0007669"/>
    <property type="project" value="UniProtKB-UniRule"/>
</dbReference>
<dbReference type="GO" id="GO:0032259">
    <property type="term" value="P:methylation"/>
    <property type="evidence" value="ECO:0007669"/>
    <property type="project" value="UniProtKB-KW"/>
</dbReference>
<dbReference type="CDD" id="cd03311">
    <property type="entry name" value="CIMS_C_terminal_like"/>
    <property type="match status" value="1"/>
</dbReference>
<dbReference type="CDD" id="cd03312">
    <property type="entry name" value="CIMS_N_terminal_like"/>
    <property type="match status" value="1"/>
</dbReference>
<dbReference type="FunFam" id="3.20.20.210:FF:000002">
    <property type="entry name" value="5-methyltetrahydropteroyltriglutamate--homocysteine methyltransferase"/>
    <property type="match status" value="1"/>
</dbReference>
<dbReference type="FunFam" id="3.20.20.210:FF:000003">
    <property type="entry name" value="5-methyltetrahydropteroyltriglutamate--homocysteine methyltransferase"/>
    <property type="match status" value="1"/>
</dbReference>
<dbReference type="Gene3D" id="3.20.20.210">
    <property type="match status" value="2"/>
</dbReference>
<dbReference type="HAMAP" id="MF_00172">
    <property type="entry name" value="Meth_synth"/>
    <property type="match status" value="1"/>
</dbReference>
<dbReference type="InterPro" id="IPR013215">
    <property type="entry name" value="Cbl-indep_Met_Synth_N"/>
</dbReference>
<dbReference type="InterPro" id="IPR006276">
    <property type="entry name" value="Cobalamin-indep_Met_synthase"/>
</dbReference>
<dbReference type="InterPro" id="IPR002629">
    <property type="entry name" value="Met_Synth_C/arc"/>
</dbReference>
<dbReference type="InterPro" id="IPR038071">
    <property type="entry name" value="UROD/MetE-like_sf"/>
</dbReference>
<dbReference type="NCBIfam" id="TIGR01371">
    <property type="entry name" value="met_syn_B12ind"/>
    <property type="match status" value="1"/>
</dbReference>
<dbReference type="NCBIfam" id="NF003556">
    <property type="entry name" value="PRK05222.1"/>
    <property type="match status" value="1"/>
</dbReference>
<dbReference type="PANTHER" id="PTHR30519">
    <property type="entry name" value="5-METHYLTETRAHYDROPTEROYLTRIGLUTAMATE--HOMOCYSTEINE METHYLTRANSFERASE"/>
    <property type="match status" value="1"/>
</dbReference>
<dbReference type="Pfam" id="PF08267">
    <property type="entry name" value="Meth_synt_1"/>
    <property type="match status" value="1"/>
</dbReference>
<dbReference type="Pfam" id="PF01717">
    <property type="entry name" value="Meth_synt_2"/>
    <property type="match status" value="1"/>
</dbReference>
<dbReference type="PIRSF" id="PIRSF000382">
    <property type="entry name" value="MeTrfase_B12_ind"/>
    <property type="match status" value="1"/>
</dbReference>
<dbReference type="SUPFAM" id="SSF51726">
    <property type="entry name" value="UROD/MetE-like"/>
    <property type="match status" value="2"/>
</dbReference>